<sequence length="375" mass="42716">MNFSINRIVLLDNLSKAAKVIDYKNVNPSLSGIYLNVLNDQVNVITTSGILSFKSILNNQNSDLEVKQEGKVLLKPKYVLEMLRRLDDEFVVFSMVEDNELIIKTNNSDFSIGVLNSEDYPLIGFREKGIEFNLNPKEVKKTIYQVFVSMNENNKKLILTGLNLKLNNNQAIFSTTDSFRISQKILEIQSDNNEDIDITIPFKTALELPKLLDNAENLKIIIVEGYITFIIDNVIFQSNLIDGKFPNVQIAFPTKFETIITVKQKSILKVLSRFDLVADDGLPAIVNIKVNEDKIEFKSFISEVGKYEEDFDDFVIEGNKSLSISFNTRFLIDAIKTLSEDRIELKLINSTKPIVINNVYDEHLKQVILPTFLSN</sequence>
<name>DPO3B_MYCCT</name>
<feature type="chain" id="PRO_0000105444" description="Beta sliding clamp">
    <location>
        <begin position="1"/>
        <end position="375"/>
    </location>
</feature>
<evidence type="ECO:0000250" key="1">
    <source>
        <dbReference type="UniProtKB" id="P0A988"/>
    </source>
</evidence>
<evidence type="ECO:0000305" key="2"/>
<comment type="function">
    <text evidence="1">Confers DNA tethering and processivity to DNA polymerases and other proteins. Acts as a clamp, forming a ring around DNA (a reaction catalyzed by the clamp-loading complex) which diffuses in an ATP-independent manner freely and bidirectionally along dsDNA. Initially characterized for its ability to contact the catalytic subunit of DNA polymerase III (Pol III), a complex, multichain enzyme responsible for most of the replicative synthesis in bacteria; Pol III exhibits 3'-5' exonuclease proofreading activity. The beta chain is required for initiation of replication as well as for processivity of DNA replication.</text>
</comment>
<comment type="subunit">
    <text evidence="1">Forms a ring-shaped head-to-tail homodimer around DNA which binds and tethers DNA polymerases and other proteins to the DNA. The DNA replisome complex has a single clamp-loading complex (3 tau and 1 each of delta, delta', psi and chi subunits) which binds 3 Pol III cores (1 core on the leading strand and 2 on the lagging strand) each with a beta sliding clamp dimer. Additional proteins in the replisome are other copies of gamma, psi and chi, Ssb, DNA helicase and RNA primase.</text>
</comment>
<comment type="subcellular location">
    <subcellularLocation>
        <location evidence="1">Cytoplasm</location>
    </subcellularLocation>
</comment>
<comment type="similarity">
    <text evidence="2">Belongs to the beta sliding clamp family.</text>
</comment>
<keyword id="KW-0963">Cytoplasm</keyword>
<keyword id="KW-0235">DNA replication</keyword>
<keyword id="KW-0238">DNA-binding</keyword>
<keyword id="KW-0239">DNA-directed DNA polymerase</keyword>
<keyword id="KW-0548">Nucleotidyltransferase</keyword>
<keyword id="KW-0808">Transferase</keyword>
<reference key="1">
    <citation type="submission" date="2005-09" db="EMBL/GenBank/DDBJ databases">
        <authorList>
            <person name="Glass J.I."/>
            <person name="Lartigue C."/>
            <person name="Pfannkoch C."/>
            <person name="Baden-Tillson H."/>
            <person name="Smith H.O."/>
            <person name="Venter J.C."/>
            <person name="Roske K."/>
            <person name="Wise K.S."/>
            <person name="Calcutt M.J."/>
            <person name="Nelson W.C."/>
            <person name="Nierman W.C."/>
        </authorList>
    </citation>
    <scope>NUCLEOTIDE SEQUENCE [LARGE SCALE GENOMIC DNA]</scope>
    <source>
        <strain>California kid / ATCC 27343 / NCTC 10154</strain>
    </source>
</reference>
<reference key="2">
    <citation type="journal article" date="1992" name="Gene">
        <title>Structure of the dnaA and DnaA-box region in the Mycoplasma capricolum chromosome: conservation and variations in the course of evolution.</title>
        <authorList>
            <person name="Fujita M.Q."/>
            <person name="Yoshikawa H."/>
            <person name="Ogasawara N."/>
        </authorList>
    </citation>
    <scope>NUCLEOTIDE SEQUENCE [GENOMIC DNA] OF 1-210</scope>
</reference>
<reference key="3">
    <citation type="journal article" date="1993" name="Nucleic Acids Res.">
        <title>Mapping of replication initiation site in Mycoplasma capricolum genome by two-dimensional gel-electrophoretic analysis.</title>
        <authorList>
            <person name="Miyata M."/>
            <person name="Sano K."/>
            <person name="Okada R."/>
            <person name="Fukumura T."/>
        </authorList>
    </citation>
    <scope>NUCLEOTIDE SEQUENCE [GENOMIC DNA] OF 211-375</scope>
</reference>
<proteinExistence type="inferred from homology"/>
<dbReference type="EMBL" id="CP000123">
    <property type="protein sequence ID" value="ABC01687.1"/>
    <property type="molecule type" value="Genomic_DNA"/>
</dbReference>
<dbReference type="EMBL" id="D90426">
    <property type="protein sequence ID" value="BAA14416.1"/>
    <property type="molecule type" value="Genomic_DNA"/>
</dbReference>
<dbReference type="EMBL" id="D14983">
    <property type="protein sequence ID" value="BAA03628.1"/>
    <property type="molecule type" value="Genomic_DNA"/>
</dbReference>
<dbReference type="PIR" id="JN0277">
    <property type="entry name" value="JN0277"/>
</dbReference>
<dbReference type="PIR" id="S42119">
    <property type="entry name" value="S42119"/>
</dbReference>
<dbReference type="RefSeq" id="WP_011386907.1">
    <property type="nucleotide sequence ID" value="NC_007633.1"/>
</dbReference>
<dbReference type="SMR" id="P24117"/>
<dbReference type="GeneID" id="23779041"/>
<dbReference type="KEGG" id="mcp:MCAP_0002"/>
<dbReference type="HOGENOM" id="CLU_038149_2_0_14"/>
<dbReference type="PhylomeDB" id="P24117"/>
<dbReference type="Proteomes" id="UP000001928">
    <property type="component" value="Chromosome"/>
</dbReference>
<dbReference type="GO" id="GO:0005737">
    <property type="term" value="C:cytoplasm"/>
    <property type="evidence" value="ECO:0007669"/>
    <property type="project" value="UniProtKB-SubCell"/>
</dbReference>
<dbReference type="GO" id="GO:0009360">
    <property type="term" value="C:DNA polymerase III complex"/>
    <property type="evidence" value="ECO:0007669"/>
    <property type="project" value="InterPro"/>
</dbReference>
<dbReference type="GO" id="GO:0008408">
    <property type="term" value="F:3'-5' exonuclease activity"/>
    <property type="evidence" value="ECO:0007669"/>
    <property type="project" value="InterPro"/>
</dbReference>
<dbReference type="GO" id="GO:0003677">
    <property type="term" value="F:DNA binding"/>
    <property type="evidence" value="ECO:0007669"/>
    <property type="project" value="UniProtKB-KW"/>
</dbReference>
<dbReference type="GO" id="GO:0003887">
    <property type="term" value="F:DNA-directed DNA polymerase activity"/>
    <property type="evidence" value="ECO:0007669"/>
    <property type="project" value="UniProtKB-KW"/>
</dbReference>
<dbReference type="GO" id="GO:0006271">
    <property type="term" value="P:DNA strand elongation involved in DNA replication"/>
    <property type="evidence" value="ECO:0007669"/>
    <property type="project" value="TreeGrafter"/>
</dbReference>
<dbReference type="CDD" id="cd00140">
    <property type="entry name" value="beta_clamp"/>
    <property type="match status" value="1"/>
</dbReference>
<dbReference type="Gene3D" id="3.70.10.10">
    <property type="match status" value="1"/>
</dbReference>
<dbReference type="Gene3D" id="3.10.150.10">
    <property type="entry name" value="DNA Polymerase III, subunit A, domain 2"/>
    <property type="match status" value="1"/>
</dbReference>
<dbReference type="InterPro" id="IPR046938">
    <property type="entry name" value="DNA_clamp_sf"/>
</dbReference>
<dbReference type="InterPro" id="IPR001001">
    <property type="entry name" value="DNA_polIII_beta"/>
</dbReference>
<dbReference type="InterPro" id="IPR022635">
    <property type="entry name" value="DNA_polIII_beta_C"/>
</dbReference>
<dbReference type="InterPro" id="IPR022637">
    <property type="entry name" value="DNA_polIII_beta_cen"/>
</dbReference>
<dbReference type="InterPro" id="IPR022634">
    <property type="entry name" value="DNA_polIII_beta_N"/>
</dbReference>
<dbReference type="NCBIfam" id="TIGR00663">
    <property type="entry name" value="dnan"/>
    <property type="match status" value="1"/>
</dbReference>
<dbReference type="NCBIfam" id="NF004184">
    <property type="entry name" value="PRK05643.3-2"/>
    <property type="match status" value="1"/>
</dbReference>
<dbReference type="PANTHER" id="PTHR30478:SF0">
    <property type="entry name" value="BETA SLIDING CLAMP"/>
    <property type="match status" value="1"/>
</dbReference>
<dbReference type="PANTHER" id="PTHR30478">
    <property type="entry name" value="DNA POLYMERASE III SUBUNIT BETA"/>
    <property type="match status" value="1"/>
</dbReference>
<dbReference type="Pfam" id="PF00712">
    <property type="entry name" value="DNA_pol3_beta"/>
    <property type="match status" value="1"/>
</dbReference>
<dbReference type="Pfam" id="PF02767">
    <property type="entry name" value="DNA_pol3_beta_2"/>
    <property type="match status" value="1"/>
</dbReference>
<dbReference type="Pfam" id="PF02768">
    <property type="entry name" value="DNA_pol3_beta_3"/>
    <property type="match status" value="1"/>
</dbReference>
<dbReference type="SMART" id="SM00480">
    <property type="entry name" value="POL3Bc"/>
    <property type="match status" value="1"/>
</dbReference>
<dbReference type="SUPFAM" id="SSF55979">
    <property type="entry name" value="DNA clamp"/>
    <property type="match status" value="3"/>
</dbReference>
<accession>P24117</accession>
<accession>Q2STB1</accession>
<organism>
    <name type="scientific">Mycoplasma capricolum subsp. capricolum (strain California kid / ATCC 27343 / NCTC 10154)</name>
    <dbReference type="NCBI Taxonomy" id="340047"/>
    <lineage>
        <taxon>Bacteria</taxon>
        <taxon>Bacillati</taxon>
        <taxon>Mycoplasmatota</taxon>
        <taxon>Mollicutes</taxon>
        <taxon>Mycoplasmataceae</taxon>
        <taxon>Mycoplasma</taxon>
    </lineage>
</organism>
<protein>
    <recommendedName>
        <fullName>Beta sliding clamp</fullName>
        <shortName>Beta clamp</shortName>
        <shortName>Sliding clamp</shortName>
    </recommendedName>
    <alternativeName>
        <fullName>Beta-clamp processivity factor</fullName>
    </alternativeName>
    <alternativeName>
        <fullName>DNA polymerase III beta sliding clamp subunit</fullName>
    </alternativeName>
    <alternativeName>
        <fullName>DNA polymerase III subunit beta</fullName>
    </alternativeName>
</protein>
<gene>
    <name type="primary">dnaN</name>
    <name type="ordered locus">MCAP_0002</name>
</gene>